<reference key="1">
    <citation type="journal article" date="1998" name="Nature">
        <title>Deciphering the biology of Mycobacterium tuberculosis from the complete genome sequence.</title>
        <authorList>
            <person name="Cole S.T."/>
            <person name="Brosch R."/>
            <person name="Parkhill J."/>
            <person name="Garnier T."/>
            <person name="Churcher C.M."/>
            <person name="Harris D.E."/>
            <person name="Gordon S.V."/>
            <person name="Eiglmeier K."/>
            <person name="Gas S."/>
            <person name="Barry C.E. III"/>
            <person name="Tekaia F."/>
            <person name="Badcock K."/>
            <person name="Basham D."/>
            <person name="Brown D."/>
            <person name="Chillingworth T."/>
            <person name="Connor R."/>
            <person name="Davies R.M."/>
            <person name="Devlin K."/>
            <person name="Feltwell T."/>
            <person name="Gentles S."/>
            <person name="Hamlin N."/>
            <person name="Holroyd S."/>
            <person name="Hornsby T."/>
            <person name="Jagels K."/>
            <person name="Krogh A."/>
            <person name="McLean J."/>
            <person name="Moule S."/>
            <person name="Murphy L.D."/>
            <person name="Oliver S."/>
            <person name="Osborne J."/>
            <person name="Quail M.A."/>
            <person name="Rajandream M.A."/>
            <person name="Rogers J."/>
            <person name="Rutter S."/>
            <person name="Seeger K."/>
            <person name="Skelton S."/>
            <person name="Squares S."/>
            <person name="Squares R."/>
            <person name="Sulston J.E."/>
            <person name="Taylor K."/>
            <person name="Whitehead S."/>
            <person name="Barrell B.G."/>
        </authorList>
    </citation>
    <scope>NUCLEOTIDE SEQUENCE [LARGE SCALE GENOMIC DNA]</scope>
    <source>
        <strain>ATCC 25618 / H37Rv</strain>
    </source>
</reference>
<reference key="2">
    <citation type="journal article" date="2005" name="Nucleic Acids Res.">
        <title>Toxin-antitoxin loci are highly abundant in free-living but lost from host-associated prokaryotes.</title>
        <authorList>
            <person name="Pandey D.P."/>
            <person name="Gerdes K."/>
        </authorList>
    </citation>
    <scope>IDENTIFICATION</scope>
    <scope>POSSIBLE FUNCTION</scope>
    <source>
        <strain>ATCC 25618 / H37Rv</strain>
    </source>
</reference>
<reference key="3">
    <citation type="journal article" date="2009" name="FEMS Microbiol. Lett.">
        <title>Killing activity and rescue function of genome-wide toxin-antitoxin loci of Mycobacterium tuberculosis.</title>
        <authorList>
            <person name="Gupta A."/>
        </authorList>
    </citation>
    <scope>EXPRESSION IN E.COLI</scope>
    <scope>FUNCTION AS A TOXIN</scope>
    <source>
        <strain>ATCC 25618 / H37Rv</strain>
    </source>
</reference>
<reference key="4">
    <citation type="journal article" date="2009" name="Microbiology">
        <title>Experimental determination of translational start sites resolves uncertainties in genomic open reading frame predictions - application to Mycobacterium tuberculosis.</title>
        <authorList>
            <person name="Smollett K.L."/>
            <person name="Fivian-Hughes A.S."/>
            <person name="Smith J.E."/>
            <person name="Chang A."/>
            <person name="Rao T."/>
            <person name="Davis E.O."/>
        </authorList>
    </citation>
    <scope>OPERON STRUCTURE</scope>
    <source>
        <strain>ATCC 25618 / H37Rv</strain>
    </source>
</reference>
<reference key="5">
    <citation type="journal article" date="2009" name="PLoS Genet.">
        <title>Comprehensive functional analysis of Mycobacterium tuberculosis toxin-antitoxin systems: implications for pathogenesis, stress responses, and evolution.</title>
        <authorList>
            <person name="Ramage H.R."/>
            <person name="Connolly L.E."/>
            <person name="Cox J.S."/>
        </authorList>
    </citation>
    <scope>EXPRESSION IN M.SMEGMATIS</scope>
    <scope>FUNCTION AS AN ANTITOXIN</scope>
    <scope>INDUCTION BY HYPOXIA</scope>
    <source>
        <strain>ATCC 35801 / TMC 107 / Erdman</strain>
    </source>
</reference>
<reference key="6">
    <citation type="journal article" date="2010" name="J. Bacteriol.">
        <title>Analyzing the regulatory role of the HigA antitoxin within Mycobacterium tuberculosis.</title>
        <authorList>
            <person name="Fivian-Hughes A.S."/>
            <person name="Davis E.O."/>
        </authorList>
    </citation>
    <scope>FUNCTION AS A TRANSCRIPTIONAL REPRESSOR</scope>
    <scope>INDUCTION</scope>
    <scope>DNA-BINDING</scope>
    <scope>DISRUPTION PHENOTYPE</scope>
    <source>
        <strain>ATCC 25618 / H37Rv</strain>
    </source>
</reference>
<reference key="7">
    <citation type="journal article" date="2011" name="MBio">
        <title>Characterization and transcriptome analysis of Mycobacterium tuberculosis persisters.</title>
        <authorList>
            <person name="Keren I."/>
            <person name="Minami S."/>
            <person name="Rubin E."/>
            <person name="Lewis K."/>
        </authorList>
    </citation>
    <scope>INDUCTION IN PERSISTER CELLS</scope>
    <source>
        <strain>ATCC 25618 / H37Rv</strain>
    </source>
</reference>
<reference key="8">
    <citation type="journal article" date="2011" name="Proc. Natl. Acad. Sci. U.S.A.">
        <title>SecB-like chaperone controls a toxin-antitoxin stress-responsive system in Mycobacterium tuberculosis.</title>
        <authorList>
            <person name="Bordes P."/>
            <person name="Cirinesi A.M."/>
            <person name="Ummels R."/>
            <person name="Sala A."/>
            <person name="Sakr S."/>
            <person name="Bitter W."/>
            <person name="Genevaux P."/>
        </authorList>
    </citation>
    <scope>EXPRESSION IN E.COLI</scope>
    <scope>FUNCTION AS AN ANTITOXIN</scope>
    <scope>SUBUNIT</scope>
    <scope>REQUIREMENT FOR SECB-LIKE CHAPERONE RV1957</scope>
    <source>
        <strain>ATCC 25618 / H37Rv</strain>
    </source>
</reference>
<reference key="9">
    <citation type="journal article" date="2014" name="Toxins">
        <title>Multiple toxin-antitoxin systems in Mycobacterium tuberculosis.</title>
        <authorList>
            <person name="Sala A."/>
            <person name="Bordes P."/>
            <person name="Genevaux P."/>
        </authorList>
    </citation>
    <scope>DISCUSSION OF POSSIBLE FUNCTION</scope>
    <source>
        <strain>ATCC 25618 / H37Rv</strain>
    </source>
</reference>
<evidence type="ECO:0000255" key="1">
    <source>
        <dbReference type="PROSITE-ProRule" id="PRU00257"/>
    </source>
</evidence>
<evidence type="ECO:0000269" key="2">
    <source>
    </source>
</evidence>
<evidence type="ECO:0000269" key="3">
    <source>
    </source>
</evidence>
<evidence type="ECO:0000269" key="4">
    <source>
    </source>
</evidence>
<evidence type="ECO:0000269" key="5">
    <source>
    </source>
</evidence>
<evidence type="ECO:0000303" key="6">
    <source>
    </source>
</evidence>
<evidence type="ECO:0000305" key="7">
    <source>
    </source>
</evidence>
<evidence type="ECO:0007829" key="8">
    <source>
        <dbReference type="PDB" id="5MTW"/>
    </source>
</evidence>
<comment type="function">
    <text evidence="4">Antitoxin component of an atypical, type II toxin-antitoxin chaperone (TAC) system. Upon expression in M.smegmatis neutralizes the effect of cognate toxin HigB1. Neutralization of HigB1 toxin in E.coli or M.marinum also requires SecB-like chaperone Rv1957, making this the first toxin-antitoxin chaperone (TAC) system. Antitoxin aggregation and degradation are prevented by the chaperone.</text>
</comment>
<comment type="function">
    <text evidence="3">In M.tuberculosis represses expression of the Rv1954A-higB1-higA1-Rv1957 operon promoter but not that of the higB1-higA1-Rv1957 operon.</text>
</comment>
<comment type="subunit">
    <text evidence="4">Interacts with SecB-like chaperone Rv1957.</text>
</comment>
<comment type="induction">
    <text evidence="2 3 5">Induced by hypoxia and probably by the DNA damaging agent mitomycin C. Part of the Rv1954A-higB1-higA1-Rv1957 operon, as well as the higB1 higA1-Rv1957 operon, which is probably the mitomycin-induced operon; the former but not latter operon is autorepressed by HigA1 (PubMed:20585061). Induced in persister cells in response to D-cycloserine (PubMed:21673191).</text>
</comment>
<comment type="disruption phenotype">
    <text evidence="3">A triple higB1-higA1-Rv1957 disruption mutant has no visible phenotype. A single deletion in this gene cannot be made, suggesting that it has antitoxin activity.</text>
</comment>
<comment type="caution">
    <text evidence="7">Upon expression in E.coli, Rv1956 has been shown to function as a toxin inhibiting cell growth and colony formation that is neutralized by coexpression with Rv1955 (PubMed:19016878). It is not clear if these conflicting results are due to expression in a heterologous system. The gene names higA and higB have been assigned to both Rv1955 and Rv1956; we have chosen to call Rv1956 higA1 after consulting the authors.</text>
</comment>
<protein>
    <recommendedName>
        <fullName evidence="6">Antitoxin HigA1</fullName>
    </recommendedName>
</protein>
<proteinExistence type="evidence at protein level"/>
<name>HIGA1_MYCTU</name>
<gene>
    <name evidence="6" type="primary">higA1</name>
    <name type="synonym">higA</name>
    <name type="ordered locus">Rv1956</name>
</gene>
<sequence>MSIDFPLGDDLAGYIAEAIAADPSFKGTLEDAEEARRLVDALIALRKHCQLSQVEVAKRMGVRQPTVSGFEKEPSDPKLSTLQRYARALDARLRLVLEVPTLREVPTWHRLSSYRGSARDHQVRVGADKEILMQTNWARHISVRQVEVA</sequence>
<feature type="chain" id="PRO_0000407371" description="Antitoxin HigA1">
    <location>
        <begin position="1"/>
        <end position="149"/>
    </location>
</feature>
<feature type="domain" description="HTH cro/C1-type" evidence="1">
    <location>
        <begin position="42"/>
        <end position="96"/>
    </location>
</feature>
<feature type="DNA-binding region" description="H-T-H motif" evidence="1">
    <location>
        <begin position="53"/>
        <end position="72"/>
    </location>
</feature>
<feature type="strand" evidence="8">
    <location>
        <begin position="113"/>
        <end position="115"/>
    </location>
</feature>
<keyword id="KW-0002">3D-structure</keyword>
<keyword id="KW-0238">DNA-binding</keyword>
<keyword id="KW-1185">Reference proteome</keyword>
<keyword id="KW-0678">Repressor</keyword>
<keyword id="KW-1277">Toxin-antitoxin system</keyword>
<keyword id="KW-0804">Transcription</keyword>
<keyword id="KW-0805">Transcription regulation</keyword>
<dbReference type="EMBL" id="AL123456">
    <property type="protein sequence ID" value="CCP44724.1"/>
    <property type="molecule type" value="Genomic_DNA"/>
</dbReference>
<dbReference type="PIR" id="H70638">
    <property type="entry name" value="H70638"/>
</dbReference>
<dbReference type="RefSeq" id="NP_216472.1">
    <property type="nucleotide sequence ID" value="NC_000962.3"/>
</dbReference>
<dbReference type="RefSeq" id="WP_003409886.1">
    <property type="nucleotide sequence ID" value="NZ_NVQJ01000048.1"/>
</dbReference>
<dbReference type="PDB" id="5MTW">
    <property type="method" value="X-ray"/>
    <property type="resolution" value="1.84 A"/>
    <property type="chains" value="E/F/G=104-116"/>
</dbReference>
<dbReference type="PDBsum" id="5MTW"/>
<dbReference type="SMR" id="P9WJA7"/>
<dbReference type="STRING" id="83332.Rv1956"/>
<dbReference type="PaxDb" id="83332-Rv1956"/>
<dbReference type="GeneID" id="45425926"/>
<dbReference type="GeneID" id="885964"/>
<dbReference type="KEGG" id="mtu:Rv1956"/>
<dbReference type="KEGG" id="mtv:RVBD_1956"/>
<dbReference type="TubercuList" id="Rv1956"/>
<dbReference type="eggNOG" id="COG1396">
    <property type="taxonomic scope" value="Bacteria"/>
</dbReference>
<dbReference type="InParanoid" id="P9WJA7"/>
<dbReference type="OrthoDB" id="5738376at2"/>
<dbReference type="Proteomes" id="UP000001584">
    <property type="component" value="Chromosome"/>
</dbReference>
<dbReference type="GO" id="GO:0003677">
    <property type="term" value="F:DNA binding"/>
    <property type="evidence" value="ECO:0007669"/>
    <property type="project" value="UniProtKB-KW"/>
</dbReference>
<dbReference type="GO" id="GO:0097351">
    <property type="term" value="F:toxin sequestering activity"/>
    <property type="evidence" value="ECO:0000353"/>
    <property type="project" value="MTBBASE"/>
</dbReference>
<dbReference type="GO" id="GO:0045892">
    <property type="term" value="P:negative regulation of DNA-templated transcription"/>
    <property type="evidence" value="ECO:0000314"/>
    <property type="project" value="MTBBASE"/>
</dbReference>
<dbReference type="GO" id="GO:0045927">
    <property type="term" value="P:positive regulation of growth"/>
    <property type="evidence" value="ECO:0000315"/>
    <property type="project" value="MTBBASE"/>
</dbReference>
<dbReference type="GO" id="GO:0001666">
    <property type="term" value="P:response to hypoxia"/>
    <property type="evidence" value="ECO:0000270"/>
    <property type="project" value="MTBBASE"/>
</dbReference>
<dbReference type="GO" id="GO:0044003">
    <property type="term" value="P:symbiont-mediated perturbation of host process"/>
    <property type="evidence" value="ECO:0000315"/>
    <property type="project" value="MTBBASE"/>
</dbReference>
<dbReference type="CDD" id="cd00093">
    <property type="entry name" value="HTH_XRE"/>
    <property type="match status" value="1"/>
</dbReference>
<dbReference type="Gene3D" id="1.10.260.40">
    <property type="entry name" value="lambda repressor-like DNA-binding domains"/>
    <property type="match status" value="1"/>
</dbReference>
<dbReference type="InterPro" id="IPR001387">
    <property type="entry name" value="Cro/C1-type_HTH"/>
</dbReference>
<dbReference type="InterPro" id="IPR010982">
    <property type="entry name" value="Lambda_DNA-bd_dom_sf"/>
</dbReference>
<dbReference type="Pfam" id="PF01381">
    <property type="entry name" value="HTH_3"/>
    <property type="match status" value="1"/>
</dbReference>
<dbReference type="SMART" id="SM00530">
    <property type="entry name" value="HTH_XRE"/>
    <property type="match status" value="1"/>
</dbReference>
<dbReference type="SUPFAM" id="SSF47413">
    <property type="entry name" value="lambda repressor-like DNA-binding domains"/>
    <property type="match status" value="1"/>
</dbReference>
<dbReference type="PROSITE" id="PS50943">
    <property type="entry name" value="HTH_CROC1"/>
    <property type="match status" value="1"/>
</dbReference>
<accession>P9WJA7</accession>
<accession>L0TB29</accession>
<accession>P95258</accession>
<accession>Q7D7P8</accession>
<organism>
    <name type="scientific">Mycobacterium tuberculosis (strain ATCC 25618 / H37Rv)</name>
    <dbReference type="NCBI Taxonomy" id="83332"/>
    <lineage>
        <taxon>Bacteria</taxon>
        <taxon>Bacillati</taxon>
        <taxon>Actinomycetota</taxon>
        <taxon>Actinomycetes</taxon>
        <taxon>Mycobacteriales</taxon>
        <taxon>Mycobacteriaceae</taxon>
        <taxon>Mycobacterium</taxon>
        <taxon>Mycobacterium tuberculosis complex</taxon>
    </lineage>
</organism>